<keyword id="KW-0966">Cell projection</keyword>
<keyword id="KW-0325">Glycoprotein</keyword>
<keyword id="KW-0472">Membrane</keyword>
<keyword id="KW-0539">Nucleus</keyword>
<keyword id="KW-1185">Reference proteome</keyword>
<keyword id="KW-0677">Repeat</keyword>
<keyword id="KW-0732">Signal</keyword>
<keyword id="KW-0812">Transmembrane</keyword>
<keyword id="KW-1133">Transmembrane helix</keyword>
<dbReference type="EMBL" id="AK132650">
    <property type="protein sequence ID" value="BAE21280.1"/>
    <property type="molecule type" value="mRNA"/>
</dbReference>
<dbReference type="EMBL" id="AL731795">
    <property type="status" value="NOT_ANNOTATED_CDS"/>
    <property type="molecule type" value="Genomic_DNA"/>
</dbReference>
<dbReference type="EMBL" id="AL844528">
    <property type="status" value="NOT_ANNOTATED_CDS"/>
    <property type="molecule type" value="Genomic_DNA"/>
</dbReference>
<dbReference type="CCDS" id="CCDS50732.1"/>
<dbReference type="RefSeq" id="NP_001028468.1">
    <property type="nucleotide sequence ID" value="NM_001033296.3"/>
</dbReference>
<dbReference type="SMR" id="Q3V172"/>
<dbReference type="BioGRID" id="230753">
    <property type="interactions" value="7"/>
</dbReference>
<dbReference type="FunCoup" id="Q3V172">
    <property type="interactions" value="337"/>
</dbReference>
<dbReference type="STRING" id="10090.ENSMUSP00000113800"/>
<dbReference type="GlyCosmos" id="Q3V172">
    <property type="glycosylation" value="2 sites, No reported glycans"/>
</dbReference>
<dbReference type="GlyGen" id="Q3V172">
    <property type="glycosylation" value="2 sites"/>
</dbReference>
<dbReference type="iPTMnet" id="Q3V172"/>
<dbReference type="PhosphoSitePlus" id="Q3V172"/>
<dbReference type="PaxDb" id="10090-ENSMUSP00000113800"/>
<dbReference type="ProteomicsDB" id="256761"/>
<dbReference type="Antibodypedia" id="67355">
    <property type="antibodies" value="16 antibodies from 8 providers"/>
</dbReference>
<dbReference type="Ensembl" id="ENSMUST00000122367.8">
    <property type="protein sequence ID" value="ENSMUSP00000113800.2"/>
    <property type="gene ID" value="ENSMUSG00000074764.12"/>
</dbReference>
<dbReference type="GeneID" id="228684"/>
<dbReference type="KEGG" id="mmu:228684"/>
<dbReference type="UCSC" id="uc008mpq.1">
    <property type="organism name" value="mouse"/>
</dbReference>
<dbReference type="AGR" id="MGI:2684964"/>
<dbReference type="CTD" id="80343"/>
<dbReference type="MGI" id="MGI:2684964">
    <property type="gene designation" value="Sel1l2"/>
</dbReference>
<dbReference type="VEuPathDB" id="HostDB:ENSMUSG00000074764"/>
<dbReference type="eggNOG" id="KOG1550">
    <property type="taxonomic scope" value="Eukaryota"/>
</dbReference>
<dbReference type="GeneTree" id="ENSGT00940000161298"/>
<dbReference type="HOGENOM" id="CLU_007931_2_1_1"/>
<dbReference type="InParanoid" id="Q3V172"/>
<dbReference type="OMA" id="IAANKYH"/>
<dbReference type="OrthoDB" id="27934at2759"/>
<dbReference type="PhylomeDB" id="Q3V172"/>
<dbReference type="TreeFam" id="TF315257"/>
<dbReference type="BioGRID-ORCS" id="228684">
    <property type="hits" value="2 hits in 77 CRISPR screens"/>
</dbReference>
<dbReference type="ChiTaRS" id="Sel1l2">
    <property type="organism name" value="mouse"/>
</dbReference>
<dbReference type="PRO" id="PR:Q3V172"/>
<dbReference type="Proteomes" id="UP000000589">
    <property type="component" value="Chromosome 2"/>
</dbReference>
<dbReference type="RNAct" id="Q3V172">
    <property type="molecule type" value="protein"/>
</dbReference>
<dbReference type="Bgee" id="ENSMUSG00000074764">
    <property type="expression patterns" value="Expressed in spermatid and 16 other cell types or tissues"/>
</dbReference>
<dbReference type="ExpressionAtlas" id="Q3V172">
    <property type="expression patterns" value="baseline and differential"/>
</dbReference>
<dbReference type="GO" id="GO:0005929">
    <property type="term" value="C:cilium"/>
    <property type="evidence" value="ECO:0007669"/>
    <property type="project" value="UniProtKB-SubCell"/>
</dbReference>
<dbReference type="GO" id="GO:0016020">
    <property type="term" value="C:membrane"/>
    <property type="evidence" value="ECO:0007669"/>
    <property type="project" value="UniProtKB-SubCell"/>
</dbReference>
<dbReference type="GO" id="GO:0016607">
    <property type="term" value="C:nuclear speck"/>
    <property type="evidence" value="ECO:0000250"/>
    <property type="project" value="UniProtKB"/>
</dbReference>
<dbReference type="Gene3D" id="1.25.40.10">
    <property type="entry name" value="Tetratricopeptide repeat domain"/>
    <property type="match status" value="2"/>
</dbReference>
<dbReference type="InterPro" id="IPR006597">
    <property type="entry name" value="Sel1-like"/>
</dbReference>
<dbReference type="InterPro" id="IPR050767">
    <property type="entry name" value="Sel1_AlgK"/>
</dbReference>
<dbReference type="InterPro" id="IPR011990">
    <property type="entry name" value="TPR-like_helical_dom_sf"/>
</dbReference>
<dbReference type="PANTHER" id="PTHR11102:SF53">
    <property type="entry name" value="PROTEIN SEL-1 HOMOLOG 2"/>
    <property type="match status" value="1"/>
</dbReference>
<dbReference type="PANTHER" id="PTHR11102">
    <property type="entry name" value="SEL-1-LIKE PROTEIN"/>
    <property type="match status" value="1"/>
</dbReference>
<dbReference type="Pfam" id="PF08238">
    <property type="entry name" value="Sel1"/>
    <property type="match status" value="11"/>
</dbReference>
<dbReference type="SMART" id="SM00671">
    <property type="entry name" value="SEL1"/>
    <property type="match status" value="11"/>
</dbReference>
<dbReference type="SUPFAM" id="SSF81901">
    <property type="entry name" value="HCP-like"/>
    <property type="match status" value="3"/>
</dbReference>
<comment type="subcellular location">
    <subcellularLocation>
        <location evidence="2">Membrane</location>
        <topology evidence="2">Single-pass type I membrane protein</topology>
    </subcellularLocation>
    <subcellularLocation>
        <location evidence="1">Cell projection</location>
        <location evidence="1">Cilium</location>
    </subcellularLocation>
    <subcellularLocation>
        <location evidence="1">Nucleus speckle</location>
    </subcellularLocation>
</comment>
<comment type="similarity">
    <text evidence="3">Belongs to the sel-1 family.</text>
</comment>
<name>SE1L2_MOUSE</name>
<organism>
    <name type="scientific">Mus musculus</name>
    <name type="common">Mouse</name>
    <dbReference type="NCBI Taxonomy" id="10090"/>
    <lineage>
        <taxon>Eukaryota</taxon>
        <taxon>Metazoa</taxon>
        <taxon>Chordata</taxon>
        <taxon>Craniata</taxon>
        <taxon>Vertebrata</taxon>
        <taxon>Euteleostomi</taxon>
        <taxon>Mammalia</taxon>
        <taxon>Eutheria</taxon>
        <taxon>Euarchontoglires</taxon>
        <taxon>Glires</taxon>
        <taxon>Rodentia</taxon>
        <taxon>Myomorpha</taxon>
        <taxon>Muroidea</taxon>
        <taxon>Muridae</taxon>
        <taxon>Murinae</taxon>
        <taxon>Mus</taxon>
        <taxon>Mus</taxon>
    </lineage>
</organism>
<feature type="signal peptide" evidence="2">
    <location>
        <begin position="1"/>
        <end position="18"/>
    </location>
</feature>
<feature type="chain" id="PRO_0000305160" description="Protein sel-1 homolog 2">
    <location>
        <begin position="19"/>
        <end position="688"/>
    </location>
</feature>
<feature type="topological domain" description="Extracellular" evidence="2">
    <location>
        <begin position="19"/>
        <end position="662"/>
    </location>
</feature>
<feature type="transmembrane region" description="Helical" evidence="2">
    <location>
        <begin position="663"/>
        <end position="683"/>
    </location>
</feature>
<feature type="topological domain" description="Cytoplasmic" evidence="2">
    <location>
        <begin position="684"/>
        <end position="688"/>
    </location>
</feature>
<feature type="repeat" description="Sel1-like 1">
    <location>
        <begin position="107"/>
        <end position="142"/>
    </location>
</feature>
<feature type="repeat" description="Sel1-like 2">
    <location>
        <begin position="143"/>
        <end position="178"/>
    </location>
</feature>
<feature type="repeat" description="Sel1-like 3">
    <location>
        <begin position="179"/>
        <end position="214"/>
    </location>
</feature>
<feature type="repeat" description="Sel1-like 4">
    <location>
        <begin position="215"/>
        <end position="250"/>
    </location>
</feature>
<feature type="repeat" description="Sel1-like 5">
    <location>
        <begin position="297"/>
        <end position="333"/>
    </location>
</feature>
<feature type="repeat" description="Sel1-like 6">
    <location>
        <begin position="334"/>
        <end position="370"/>
    </location>
</feature>
<feature type="repeat" description="Sel1-like 7">
    <location>
        <begin position="371"/>
        <end position="406"/>
    </location>
</feature>
<feature type="repeat" description="Sel1-like 8">
    <location>
        <begin position="407"/>
        <end position="442"/>
    </location>
</feature>
<feature type="repeat" description="Sel1-like 9">
    <location>
        <begin position="443"/>
        <end position="478"/>
    </location>
</feature>
<feature type="repeat" description="Sel1-like 10">
    <location>
        <begin position="551"/>
        <end position="586"/>
    </location>
</feature>
<feature type="repeat" description="Sel1-like 11">
    <location>
        <begin position="588"/>
        <end position="623"/>
    </location>
</feature>
<feature type="glycosylation site" description="N-linked (GlcNAc...) asparagine" evidence="2">
    <location>
        <position position="34"/>
    </location>
</feature>
<feature type="glycosylation site" description="N-linked (GlcNAc...) asparagine" evidence="2">
    <location>
        <position position="162"/>
    </location>
</feature>
<accession>Q3V172</accession>
<accession>A2AHP5</accession>
<accession>B0QZY0</accession>
<sequence length="688" mass="77989">MNPLALLVEILIIIEVTTKNTEAERYNRKQKEVNVTTQVSVSKVKQFLLYLLEQGNANKITNKRENPLEKKKHQHKLKIKGIQNKNLLKRNQNYFKNPAKKSITDEGDELFKMGNKILQESKSQKQKTEAYTLFTRAANMGNLKAMEKMADAWLFGSFGMQNITAAIQLYESLAKEGSYKAQNALGFLSSYGIGMEYDQAKALIYYTFGSAGGSMMSQMILGYRYLSGINVLQNCEVALNHYKKVADYIADKLEKSEGIPVEKVRLTERPENLSSNSEILDWDIYQYYKFLAERGDVQIQVSLGQLHLIGRKGLDQDYSKALYYFLKAAKAGSANAMAFIGKMYFEGNAAAPQNNATAFKYFSMAASKGNAIGLHGLGLLYFHGKGVPVNYGEALKYFQKAAEKGWPNAQFQLGFMYYSGSGVWKDYKLAFKYFYLASQSGQPLAIYYLAEMYATGTGVLRSCRTAVELYKGVCELGHWAEKFLTAYFAYKDGDIDSSLIQYALLAEMGYEVAQSNSAFILESKKAKILGKEKLYPMALLLWNRAAIQGNAFARVKIGDYHYYGYGTKKDYETAATHYSIAADKHHSAQAMFNLAYMYEHGLGIAKDIHLARRLYDMAAQTSPDAHIPVFFALMKLETMHLLHDILFFNFTMKWKWLKLDSTVGPYWDLLVIGLIVAMLIFLLRNRHR</sequence>
<reference key="1">
    <citation type="journal article" date="2005" name="Science">
        <title>The transcriptional landscape of the mammalian genome.</title>
        <authorList>
            <person name="Carninci P."/>
            <person name="Kasukawa T."/>
            <person name="Katayama S."/>
            <person name="Gough J."/>
            <person name="Frith M.C."/>
            <person name="Maeda N."/>
            <person name="Oyama R."/>
            <person name="Ravasi T."/>
            <person name="Lenhard B."/>
            <person name="Wells C."/>
            <person name="Kodzius R."/>
            <person name="Shimokawa K."/>
            <person name="Bajic V.B."/>
            <person name="Brenner S.E."/>
            <person name="Batalov S."/>
            <person name="Forrest A.R."/>
            <person name="Zavolan M."/>
            <person name="Davis M.J."/>
            <person name="Wilming L.G."/>
            <person name="Aidinis V."/>
            <person name="Allen J.E."/>
            <person name="Ambesi-Impiombato A."/>
            <person name="Apweiler R."/>
            <person name="Aturaliya R.N."/>
            <person name="Bailey T.L."/>
            <person name="Bansal M."/>
            <person name="Baxter L."/>
            <person name="Beisel K.W."/>
            <person name="Bersano T."/>
            <person name="Bono H."/>
            <person name="Chalk A.M."/>
            <person name="Chiu K.P."/>
            <person name="Choudhary V."/>
            <person name="Christoffels A."/>
            <person name="Clutterbuck D.R."/>
            <person name="Crowe M.L."/>
            <person name="Dalla E."/>
            <person name="Dalrymple B.P."/>
            <person name="de Bono B."/>
            <person name="Della Gatta G."/>
            <person name="di Bernardo D."/>
            <person name="Down T."/>
            <person name="Engstrom P."/>
            <person name="Fagiolini M."/>
            <person name="Faulkner G."/>
            <person name="Fletcher C.F."/>
            <person name="Fukushima T."/>
            <person name="Furuno M."/>
            <person name="Futaki S."/>
            <person name="Gariboldi M."/>
            <person name="Georgii-Hemming P."/>
            <person name="Gingeras T.R."/>
            <person name="Gojobori T."/>
            <person name="Green R.E."/>
            <person name="Gustincich S."/>
            <person name="Harbers M."/>
            <person name="Hayashi Y."/>
            <person name="Hensch T.K."/>
            <person name="Hirokawa N."/>
            <person name="Hill D."/>
            <person name="Huminiecki L."/>
            <person name="Iacono M."/>
            <person name="Ikeo K."/>
            <person name="Iwama A."/>
            <person name="Ishikawa T."/>
            <person name="Jakt M."/>
            <person name="Kanapin A."/>
            <person name="Katoh M."/>
            <person name="Kawasawa Y."/>
            <person name="Kelso J."/>
            <person name="Kitamura H."/>
            <person name="Kitano H."/>
            <person name="Kollias G."/>
            <person name="Krishnan S.P."/>
            <person name="Kruger A."/>
            <person name="Kummerfeld S.K."/>
            <person name="Kurochkin I.V."/>
            <person name="Lareau L.F."/>
            <person name="Lazarevic D."/>
            <person name="Lipovich L."/>
            <person name="Liu J."/>
            <person name="Liuni S."/>
            <person name="McWilliam S."/>
            <person name="Madan Babu M."/>
            <person name="Madera M."/>
            <person name="Marchionni L."/>
            <person name="Matsuda H."/>
            <person name="Matsuzawa S."/>
            <person name="Miki H."/>
            <person name="Mignone F."/>
            <person name="Miyake S."/>
            <person name="Morris K."/>
            <person name="Mottagui-Tabar S."/>
            <person name="Mulder N."/>
            <person name="Nakano N."/>
            <person name="Nakauchi H."/>
            <person name="Ng P."/>
            <person name="Nilsson R."/>
            <person name="Nishiguchi S."/>
            <person name="Nishikawa S."/>
            <person name="Nori F."/>
            <person name="Ohara O."/>
            <person name="Okazaki Y."/>
            <person name="Orlando V."/>
            <person name="Pang K.C."/>
            <person name="Pavan W.J."/>
            <person name="Pavesi G."/>
            <person name="Pesole G."/>
            <person name="Petrovsky N."/>
            <person name="Piazza S."/>
            <person name="Reed J."/>
            <person name="Reid J.F."/>
            <person name="Ring B.Z."/>
            <person name="Ringwald M."/>
            <person name="Rost B."/>
            <person name="Ruan Y."/>
            <person name="Salzberg S.L."/>
            <person name="Sandelin A."/>
            <person name="Schneider C."/>
            <person name="Schoenbach C."/>
            <person name="Sekiguchi K."/>
            <person name="Semple C.A."/>
            <person name="Seno S."/>
            <person name="Sessa L."/>
            <person name="Sheng Y."/>
            <person name="Shibata Y."/>
            <person name="Shimada H."/>
            <person name="Shimada K."/>
            <person name="Silva D."/>
            <person name="Sinclair B."/>
            <person name="Sperling S."/>
            <person name="Stupka E."/>
            <person name="Sugiura K."/>
            <person name="Sultana R."/>
            <person name="Takenaka Y."/>
            <person name="Taki K."/>
            <person name="Tammoja K."/>
            <person name="Tan S.L."/>
            <person name="Tang S."/>
            <person name="Taylor M.S."/>
            <person name="Tegner J."/>
            <person name="Teichmann S.A."/>
            <person name="Ueda H.R."/>
            <person name="van Nimwegen E."/>
            <person name="Verardo R."/>
            <person name="Wei C.L."/>
            <person name="Yagi K."/>
            <person name="Yamanishi H."/>
            <person name="Zabarovsky E."/>
            <person name="Zhu S."/>
            <person name="Zimmer A."/>
            <person name="Hide W."/>
            <person name="Bult C."/>
            <person name="Grimmond S.M."/>
            <person name="Teasdale R.D."/>
            <person name="Liu E.T."/>
            <person name="Brusic V."/>
            <person name="Quackenbush J."/>
            <person name="Wahlestedt C."/>
            <person name="Mattick J.S."/>
            <person name="Hume D.A."/>
            <person name="Kai C."/>
            <person name="Sasaki D."/>
            <person name="Tomaru Y."/>
            <person name="Fukuda S."/>
            <person name="Kanamori-Katayama M."/>
            <person name="Suzuki M."/>
            <person name="Aoki J."/>
            <person name="Arakawa T."/>
            <person name="Iida J."/>
            <person name="Imamura K."/>
            <person name="Itoh M."/>
            <person name="Kato T."/>
            <person name="Kawaji H."/>
            <person name="Kawagashira N."/>
            <person name="Kawashima T."/>
            <person name="Kojima M."/>
            <person name="Kondo S."/>
            <person name="Konno H."/>
            <person name="Nakano K."/>
            <person name="Ninomiya N."/>
            <person name="Nishio T."/>
            <person name="Okada M."/>
            <person name="Plessy C."/>
            <person name="Shibata K."/>
            <person name="Shiraki T."/>
            <person name="Suzuki S."/>
            <person name="Tagami M."/>
            <person name="Waki K."/>
            <person name="Watahiki A."/>
            <person name="Okamura-Oho Y."/>
            <person name="Suzuki H."/>
            <person name="Kawai J."/>
            <person name="Hayashizaki Y."/>
        </authorList>
    </citation>
    <scope>NUCLEOTIDE SEQUENCE [LARGE SCALE MRNA]</scope>
    <source>
        <strain>C57BL/6J</strain>
        <tissue>Testis</tissue>
    </source>
</reference>
<reference key="2">
    <citation type="journal article" date="2009" name="PLoS Biol.">
        <title>Lineage-specific biology revealed by a finished genome assembly of the mouse.</title>
        <authorList>
            <person name="Church D.M."/>
            <person name="Goodstadt L."/>
            <person name="Hillier L.W."/>
            <person name="Zody M.C."/>
            <person name="Goldstein S."/>
            <person name="She X."/>
            <person name="Bult C.J."/>
            <person name="Agarwala R."/>
            <person name="Cherry J.L."/>
            <person name="DiCuccio M."/>
            <person name="Hlavina W."/>
            <person name="Kapustin Y."/>
            <person name="Meric P."/>
            <person name="Maglott D."/>
            <person name="Birtle Z."/>
            <person name="Marques A.C."/>
            <person name="Graves T."/>
            <person name="Zhou S."/>
            <person name="Teague B."/>
            <person name="Potamousis K."/>
            <person name="Churas C."/>
            <person name="Place M."/>
            <person name="Herschleb J."/>
            <person name="Runnheim R."/>
            <person name="Forrest D."/>
            <person name="Amos-Landgraf J."/>
            <person name="Schwartz D.C."/>
            <person name="Cheng Z."/>
            <person name="Lindblad-Toh K."/>
            <person name="Eichler E.E."/>
            <person name="Ponting C.P."/>
        </authorList>
    </citation>
    <scope>NUCLEOTIDE SEQUENCE [LARGE SCALE GENOMIC DNA]</scope>
    <source>
        <strain>C57BL/6J</strain>
    </source>
</reference>
<evidence type="ECO:0000250" key="1">
    <source>
        <dbReference type="UniProtKB" id="Q5TEA6"/>
    </source>
</evidence>
<evidence type="ECO:0000255" key="2"/>
<evidence type="ECO:0000305" key="3"/>
<gene>
    <name type="primary">Sel1l2</name>
    <name type="synonym">Gm118</name>
</gene>
<proteinExistence type="evidence at transcript level"/>
<protein>
    <recommendedName>
        <fullName>Protein sel-1 homolog 2</fullName>
    </recommendedName>
    <alternativeName>
        <fullName>Suppressor of lin-12-like protein 2</fullName>
        <shortName>Sel-1L2</shortName>
    </alternativeName>
</protein>